<reference key="1">
    <citation type="submission" date="2006-01" db="EMBL/GenBank/DDBJ databases">
        <title>Complete sequence of Novosphingobium aromaticivorans DSM 12444.</title>
        <authorList>
            <consortium name="US DOE Joint Genome Institute"/>
            <person name="Copeland A."/>
            <person name="Lucas S."/>
            <person name="Lapidus A."/>
            <person name="Barry K."/>
            <person name="Detter J.C."/>
            <person name="Glavina T."/>
            <person name="Hammon N."/>
            <person name="Israni S."/>
            <person name="Pitluck S."/>
            <person name="Chain P."/>
            <person name="Malfatti S."/>
            <person name="Shin M."/>
            <person name="Vergez L."/>
            <person name="Schmutz J."/>
            <person name="Larimer F."/>
            <person name="Land M."/>
            <person name="Kyrpides N."/>
            <person name="Ivanova N."/>
            <person name="Fredrickson J."/>
            <person name="Balkwill D."/>
            <person name="Romine M.F."/>
            <person name="Richardson P."/>
        </authorList>
    </citation>
    <scope>NUCLEOTIDE SEQUENCE [LARGE SCALE GENOMIC DNA]</scope>
    <source>
        <strain>ATCC 700278 / DSM 12444 / CCUG 56034 / CIP 105152 / NBRC 16084 / F199</strain>
    </source>
</reference>
<proteinExistence type="inferred from homology"/>
<feature type="chain" id="PRO_1000015715" description="Elongation factor Tu">
    <location>
        <begin position="1"/>
        <end position="396"/>
    </location>
</feature>
<feature type="domain" description="tr-type G">
    <location>
        <begin position="10"/>
        <end position="207"/>
    </location>
</feature>
<feature type="region of interest" description="G1" evidence="1">
    <location>
        <begin position="19"/>
        <end position="26"/>
    </location>
</feature>
<feature type="region of interest" description="G2" evidence="1">
    <location>
        <begin position="60"/>
        <end position="64"/>
    </location>
</feature>
<feature type="region of interest" description="G3" evidence="1">
    <location>
        <begin position="81"/>
        <end position="84"/>
    </location>
</feature>
<feature type="region of interest" description="G4" evidence="1">
    <location>
        <begin position="136"/>
        <end position="139"/>
    </location>
</feature>
<feature type="region of interest" description="G5" evidence="1">
    <location>
        <begin position="174"/>
        <end position="176"/>
    </location>
</feature>
<feature type="binding site" evidence="2">
    <location>
        <begin position="19"/>
        <end position="26"/>
    </location>
    <ligand>
        <name>GTP</name>
        <dbReference type="ChEBI" id="CHEBI:37565"/>
    </ligand>
</feature>
<feature type="binding site" evidence="2">
    <location>
        <position position="26"/>
    </location>
    <ligand>
        <name>Mg(2+)</name>
        <dbReference type="ChEBI" id="CHEBI:18420"/>
    </ligand>
</feature>
<feature type="binding site" evidence="2">
    <location>
        <begin position="81"/>
        <end position="85"/>
    </location>
    <ligand>
        <name>GTP</name>
        <dbReference type="ChEBI" id="CHEBI:37565"/>
    </ligand>
</feature>
<feature type="binding site" evidence="2">
    <location>
        <begin position="136"/>
        <end position="139"/>
    </location>
    <ligand>
        <name>GTP</name>
        <dbReference type="ChEBI" id="CHEBI:37565"/>
    </ligand>
</feature>
<evidence type="ECO:0000250" key="1"/>
<evidence type="ECO:0000255" key="2">
    <source>
        <dbReference type="HAMAP-Rule" id="MF_00118"/>
    </source>
</evidence>
<name>EFTU_NOVAD</name>
<gene>
    <name evidence="2" type="primary">tuf</name>
    <name type="ordered locus">Saro_1247</name>
</gene>
<comment type="function">
    <text evidence="2">GTP hydrolase that promotes the GTP-dependent binding of aminoacyl-tRNA to the A-site of ribosomes during protein biosynthesis.</text>
</comment>
<comment type="catalytic activity">
    <reaction evidence="2">
        <text>GTP + H2O = GDP + phosphate + H(+)</text>
        <dbReference type="Rhea" id="RHEA:19669"/>
        <dbReference type="ChEBI" id="CHEBI:15377"/>
        <dbReference type="ChEBI" id="CHEBI:15378"/>
        <dbReference type="ChEBI" id="CHEBI:37565"/>
        <dbReference type="ChEBI" id="CHEBI:43474"/>
        <dbReference type="ChEBI" id="CHEBI:58189"/>
        <dbReference type="EC" id="3.6.5.3"/>
    </reaction>
    <physiologicalReaction direction="left-to-right" evidence="2">
        <dbReference type="Rhea" id="RHEA:19670"/>
    </physiologicalReaction>
</comment>
<comment type="subunit">
    <text evidence="2">Monomer.</text>
</comment>
<comment type="subcellular location">
    <subcellularLocation>
        <location evidence="2">Cytoplasm</location>
    </subcellularLocation>
</comment>
<comment type="similarity">
    <text evidence="2">Belongs to the TRAFAC class translation factor GTPase superfamily. Classic translation factor GTPase family. EF-Tu/EF-1A subfamily.</text>
</comment>
<dbReference type="EC" id="3.6.5.3" evidence="2"/>
<dbReference type="EMBL" id="CP000248">
    <property type="protein sequence ID" value="ABD25691.1"/>
    <property type="molecule type" value="Genomic_DNA"/>
</dbReference>
<dbReference type="RefSeq" id="WP_011444905.1">
    <property type="nucleotide sequence ID" value="NC_007794.1"/>
</dbReference>
<dbReference type="SMR" id="Q2G8Y2"/>
<dbReference type="STRING" id="279238.Saro_1247"/>
<dbReference type="KEGG" id="nar:Saro_1247"/>
<dbReference type="eggNOG" id="COG0050">
    <property type="taxonomic scope" value="Bacteria"/>
</dbReference>
<dbReference type="HOGENOM" id="CLU_007265_0_0_5"/>
<dbReference type="Proteomes" id="UP000009134">
    <property type="component" value="Chromosome"/>
</dbReference>
<dbReference type="GO" id="GO:0005829">
    <property type="term" value="C:cytosol"/>
    <property type="evidence" value="ECO:0007669"/>
    <property type="project" value="TreeGrafter"/>
</dbReference>
<dbReference type="GO" id="GO:0005525">
    <property type="term" value="F:GTP binding"/>
    <property type="evidence" value="ECO:0007669"/>
    <property type="project" value="UniProtKB-UniRule"/>
</dbReference>
<dbReference type="GO" id="GO:0003924">
    <property type="term" value="F:GTPase activity"/>
    <property type="evidence" value="ECO:0007669"/>
    <property type="project" value="InterPro"/>
</dbReference>
<dbReference type="GO" id="GO:0097216">
    <property type="term" value="F:guanosine tetraphosphate binding"/>
    <property type="evidence" value="ECO:0007669"/>
    <property type="project" value="UniProtKB-ARBA"/>
</dbReference>
<dbReference type="GO" id="GO:0003746">
    <property type="term" value="F:translation elongation factor activity"/>
    <property type="evidence" value="ECO:0007669"/>
    <property type="project" value="UniProtKB-UniRule"/>
</dbReference>
<dbReference type="CDD" id="cd01884">
    <property type="entry name" value="EF_Tu"/>
    <property type="match status" value="1"/>
</dbReference>
<dbReference type="CDD" id="cd03697">
    <property type="entry name" value="EFTU_II"/>
    <property type="match status" value="1"/>
</dbReference>
<dbReference type="CDD" id="cd03707">
    <property type="entry name" value="EFTU_III"/>
    <property type="match status" value="1"/>
</dbReference>
<dbReference type="FunFam" id="2.40.30.10:FF:000001">
    <property type="entry name" value="Elongation factor Tu"/>
    <property type="match status" value="1"/>
</dbReference>
<dbReference type="FunFam" id="3.40.50.300:FF:000003">
    <property type="entry name" value="Elongation factor Tu"/>
    <property type="match status" value="1"/>
</dbReference>
<dbReference type="Gene3D" id="3.40.50.300">
    <property type="entry name" value="P-loop containing nucleotide triphosphate hydrolases"/>
    <property type="match status" value="1"/>
</dbReference>
<dbReference type="Gene3D" id="2.40.30.10">
    <property type="entry name" value="Translation factors"/>
    <property type="match status" value="2"/>
</dbReference>
<dbReference type="HAMAP" id="MF_00118_B">
    <property type="entry name" value="EF_Tu_B"/>
    <property type="match status" value="1"/>
</dbReference>
<dbReference type="InterPro" id="IPR041709">
    <property type="entry name" value="EF-Tu_GTP-bd"/>
</dbReference>
<dbReference type="InterPro" id="IPR050055">
    <property type="entry name" value="EF-Tu_GTPase"/>
</dbReference>
<dbReference type="InterPro" id="IPR004161">
    <property type="entry name" value="EFTu-like_2"/>
</dbReference>
<dbReference type="InterPro" id="IPR033720">
    <property type="entry name" value="EFTU_2"/>
</dbReference>
<dbReference type="InterPro" id="IPR031157">
    <property type="entry name" value="G_TR_CS"/>
</dbReference>
<dbReference type="InterPro" id="IPR027417">
    <property type="entry name" value="P-loop_NTPase"/>
</dbReference>
<dbReference type="InterPro" id="IPR005225">
    <property type="entry name" value="Small_GTP-bd"/>
</dbReference>
<dbReference type="InterPro" id="IPR000795">
    <property type="entry name" value="T_Tr_GTP-bd_dom"/>
</dbReference>
<dbReference type="InterPro" id="IPR009000">
    <property type="entry name" value="Transl_B-barrel_sf"/>
</dbReference>
<dbReference type="InterPro" id="IPR009001">
    <property type="entry name" value="Transl_elong_EF1A/Init_IF2_C"/>
</dbReference>
<dbReference type="InterPro" id="IPR004541">
    <property type="entry name" value="Transl_elong_EFTu/EF1A_bac/org"/>
</dbReference>
<dbReference type="InterPro" id="IPR004160">
    <property type="entry name" value="Transl_elong_EFTu/EF1A_C"/>
</dbReference>
<dbReference type="NCBIfam" id="TIGR00485">
    <property type="entry name" value="EF-Tu"/>
    <property type="match status" value="1"/>
</dbReference>
<dbReference type="NCBIfam" id="NF000766">
    <property type="entry name" value="PRK00049.1"/>
    <property type="match status" value="1"/>
</dbReference>
<dbReference type="NCBIfam" id="NF009372">
    <property type="entry name" value="PRK12735.1"/>
    <property type="match status" value="1"/>
</dbReference>
<dbReference type="NCBIfam" id="NF009373">
    <property type="entry name" value="PRK12736.1"/>
    <property type="match status" value="1"/>
</dbReference>
<dbReference type="NCBIfam" id="TIGR00231">
    <property type="entry name" value="small_GTP"/>
    <property type="match status" value="1"/>
</dbReference>
<dbReference type="PANTHER" id="PTHR43721:SF22">
    <property type="entry name" value="ELONGATION FACTOR TU, MITOCHONDRIAL"/>
    <property type="match status" value="1"/>
</dbReference>
<dbReference type="PANTHER" id="PTHR43721">
    <property type="entry name" value="ELONGATION FACTOR TU-RELATED"/>
    <property type="match status" value="1"/>
</dbReference>
<dbReference type="Pfam" id="PF00009">
    <property type="entry name" value="GTP_EFTU"/>
    <property type="match status" value="1"/>
</dbReference>
<dbReference type="Pfam" id="PF03144">
    <property type="entry name" value="GTP_EFTU_D2"/>
    <property type="match status" value="1"/>
</dbReference>
<dbReference type="Pfam" id="PF03143">
    <property type="entry name" value="GTP_EFTU_D3"/>
    <property type="match status" value="1"/>
</dbReference>
<dbReference type="PRINTS" id="PR00315">
    <property type="entry name" value="ELONGATNFCT"/>
</dbReference>
<dbReference type="SUPFAM" id="SSF50465">
    <property type="entry name" value="EF-Tu/eEF-1alpha/eIF2-gamma C-terminal domain"/>
    <property type="match status" value="1"/>
</dbReference>
<dbReference type="SUPFAM" id="SSF52540">
    <property type="entry name" value="P-loop containing nucleoside triphosphate hydrolases"/>
    <property type="match status" value="1"/>
</dbReference>
<dbReference type="SUPFAM" id="SSF50447">
    <property type="entry name" value="Translation proteins"/>
    <property type="match status" value="1"/>
</dbReference>
<dbReference type="PROSITE" id="PS00301">
    <property type="entry name" value="G_TR_1"/>
    <property type="match status" value="1"/>
</dbReference>
<dbReference type="PROSITE" id="PS51722">
    <property type="entry name" value="G_TR_2"/>
    <property type="match status" value="1"/>
</dbReference>
<sequence>MAKAKFERNKPHCNIGTIGHVDHGKTTLTAAITKVLAEQGGAEFTDYANIDKAPEERERGITISTAHVEYETANRHYAHVDCPGHADYVKNMITGAAQMDGAILVVNAADGPMPQTREHILLARQVGVPALVVYMNKVDQVDDEEILELVELEVRELLSSYDFPGDDIPIVKGSALAALEGRDDNIGKDSINALMAAVDAYIPQPPRPTDKPFLMPVEDVFSISGRGTVVTGRIETGIIKVGEEVEIIGLKDTQKTTVTGVEMFRKLLDQGEAGDNIGALIRGIKREEVERGQVLAKPGSVTPHTEFSAEVYVLSKDEGGRHTPFFANYRPQFYFRTTDVTGEVVLPEGTEMVMPGDNVTLAVKLIAPIAMDEGLRFAIREGGRTVGSGVVSKITK</sequence>
<organism>
    <name type="scientific">Novosphingobium aromaticivorans (strain ATCC 700278 / DSM 12444 / CCUG 56034 / CIP 105152 / NBRC 16084 / F199)</name>
    <dbReference type="NCBI Taxonomy" id="279238"/>
    <lineage>
        <taxon>Bacteria</taxon>
        <taxon>Pseudomonadati</taxon>
        <taxon>Pseudomonadota</taxon>
        <taxon>Alphaproteobacteria</taxon>
        <taxon>Sphingomonadales</taxon>
        <taxon>Sphingomonadaceae</taxon>
        <taxon>Novosphingobium</taxon>
    </lineage>
</organism>
<keyword id="KW-0963">Cytoplasm</keyword>
<keyword id="KW-0251">Elongation factor</keyword>
<keyword id="KW-0342">GTP-binding</keyword>
<keyword id="KW-0378">Hydrolase</keyword>
<keyword id="KW-0460">Magnesium</keyword>
<keyword id="KW-0479">Metal-binding</keyword>
<keyword id="KW-0547">Nucleotide-binding</keyword>
<keyword id="KW-0648">Protein biosynthesis</keyword>
<keyword id="KW-1185">Reference proteome</keyword>
<accession>Q2G8Y2</accession>
<protein>
    <recommendedName>
        <fullName evidence="2">Elongation factor Tu</fullName>
        <shortName evidence="2">EF-Tu</shortName>
        <ecNumber evidence="2">3.6.5.3</ecNumber>
    </recommendedName>
</protein>